<keyword id="KW-1003">Cell membrane</keyword>
<keyword id="KW-0275">Fatty acid biosynthesis</keyword>
<keyword id="KW-0276">Fatty acid metabolism</keyword>
<keyword id="KW-0408">Iron</keyword>
<keyword id="KW-0444">Lipid biosynthesis</keyword>
<keyword id="KW-0443">Lipid metabolism</keyword>
<keyword id="KW-0472">Membrane</keyword>
<keyword id="KW-0479">Metal-binding</keyword>
<keyword id="KW-0521">NADP</keyword>
<keyword id="KW-0560">Oxidoreductase</keyword>
<keyword id="KW-1185">Reference proteome</keyword>
<evidence type="ECO:0000250" key="1">
    <source>
        <dbReference type="UniProtKB" id="P13516"/>
    </source>
</evidence>
<evidence type="ECO:0000269" key="2">
    <source>
    </source>
</evidence>
<evidence type="ECO:0000269" key="3">
    <source>
    </source>
</evidence>
<evidence type="ECO:0000269" key="4">
    <source>
    </source>
</evidence>
<evidence type="ECO:0000269" key="5">
    <source>
    </source>
</evidence>
<evidence type="ECO:0000303" key="6">
    <source>
    </source>
</evidence>
<evidence type="ECO:0000305" key="7"/>
<evidence type="ECO:0000305" key="8">
    <source>
    </source>
</evidence>
<evidence type="ECO:0000305" key="9">
    <source>
    </source>
</evidence>
<evidence type="ECO:0000305" key="10">
    <source>
    </source>
</evidence>
<proteinExistence type="evidence at protein level"/>
<gene>
    <name evidence="6" type="primary">desA3</name>
    <name type="ordered locus">Rv3229c</name>
</gene>
<accession>P9WNZ3</accession>
<accession>L0TC73</accession>
<accession>Q6MWZ3</accession>
<accession>Q7D5W1</accession>
<protein>
    <recommendedName>
        <fullName evidence="7">NADPH-dependent stearoyl-CoA 9-desaturase</fullName>
        <ecNumber evidence="4">1.14.19.n4</ecNumber>
    </recommendedName>
    <alternativeName>
        <fullName evidence="6">Delta(9)-stearoyl desaturase</fullName>
    </alternativeName>
    <alternativeName>
        <fullName evidence="7">Stearoyl-CoA 9-desaturase (NADPH)</fullName>
    </alternativeName>
    <alternativeName>
        <fullName evidence="6">Stearoyl-CoA Delta(9)-desaturase</fullName>
    </alternativeName>
</protein>
<feature type="chain" id="PRO_0000392677" description="NADPH-dependent stearoyl-CoA 9-desaturase">
    <location>
        <begin position="1"/>
        <end position="427"/>
    </location>
</feature>
<feature type="binding site" evidence="1 8">
    <location>
        <position position="90"/>
    </location>
    <ligand>
        <name>Fe cation</name>
        <dbReference type="ChEBI" id="CHEBI:24875"/>
        <label>1</label>
    </ligand>
</feature>
<feature type="binding site" evidence="1 8">
    <location>
        <position position="94"/>
    </location>
    <ligand>
        <name>Fe cation</name>
        <dbReference type="ChEBI" id="CHEBI:24875"/>
        <label>1</label>
    </ligand>
</feature>
<feature type="binding site" evidence="1 8">
    <location>
        <position position="125"/>
    </location>
    <ligand>
        <name>Fe cation</name>
        <dbReference type="ChEBI" id="CHEBI:24875"/>
        <label>1</label>
    </ligand>
</feature>
<feature type="binding site" evidence="1 8">
    <location>
        <position position="129"/>
    </location>
    <ligand>
        <name>Fe cation</name>
        <dbReference type="ChEBI" id="CHEBI:24875"/>
        <label>2</label>
    </ligand>
</feature>
<feature type="binding site" evidence="1 8">
    <location>
        <position position="130"/>
    </location>
    <ligand>
        <name>Fe cation</name>
        <dbReference type="ChEBI" id="CHEBI:24875"/>
        <label>1</label>
    </ligand>
</feature>
<feature type="binding site" evidence="1 8">
    <location>
        <position position="304"/>
    </location>
    <ligand>
        <name>Fe cation</name>
        <dbReference type="ChEBI" id="CHEBI:24875"/>
        <label>2</label>
    </ligand>
</feature>
<feature type="binding site" evidence="1 8">
    <location>
        <position position="308"/>
    </location>
    <ligand>
        <name>Fe cation</name>
        <dbReference type="ChEBI" id="CHEBI:24875"/>
        <label>1</label>
    </ligand>
</feature>
<feature type="binding site" evidence="1 8">
    <location>
        <position position="309"/>
    </location>
    <ligand>
        <name>Fe cation</name>
        <dbReference type="ChEBI" id="CHEBI:24875"/>
        <label>2</label>
    </ligand>
</feature>
<feature type="mutagenesis site" description="Enhances catalytic activity and stability." evidence="5">
    <original>LAA</original>
    <variation>DKD</variation>
    <variation>LEA</variation>
    <location>
        <begin position="425"/>
        <end position="427"/>
    </location>
</feature>
<name>DESA3_MYCTU</name>
<reference key="1">
    <citation type="journal article" date="1998" name="Nature">
        <title>Deciphering the biology of Mycobacterium tuberculosis from the complete genome sequence.</title>
        <authorList>
            <person name="Cole S.T."/>
            <person name="Brosch R."/>
            <person name="Parkhill J."/>
            <person name="Garnier T."/>
            <person name="Churcher C.M."/>
            <person name="Harris D.E."/>
            <person name="Gordon S.V."/>
            <person name="Eiglmeier K."/>
            <person name="Gas S."/>
            <person name="Barry C.E. III"/>
            <person name="Tekaia F."/>
            <person name="Badcock K."/>
            <person name="Basham D."/>
            <person name="Brown D."/>
            <person name="Chillingworth T."/>
            <person name="Connor R."/>
            <person name="Davies R.M."/>
            <person name="Devlin K."/>
            <person name="Feltwell T."/>
            <person name="Gentles S."/>
            <person name="Hamlin N."/>
            <person name="Holroyd S."/>
            <person name="Hornsby T."/>
            <person name="Jagels K."/>
            <person name="Krogh A."/>
            <person name="McLean J."/>
            <person name="Moule S."/>
            <person name="Murphy L.D."/>
            <person name="Oliver S."/>
            <person name="Osborne J."/>
            <person name="Quail M.A."/>
            <person name="Rajandream M.A."/>
            <person name="Rogers J."/>
            <person name="Rutter S."/>
            <person name="Seeger K."/>
            <person name="Skelton S."/>
            <person name="Squares S."/>
            <person name="Squares R."/>
            <person name="Sulston J.E."/>
            <person name="Taylor K."/>
            <person name="Whitehead S."/>
            <person name="Barrell B.G."/>
        </authorList>
    </citation>
    <scope>NUCLEOTIDE SEQUENCE [LARGE SCALE GENOMIC DNA]</scope>
    <source>
        <strain>ATCC 25618 / H37Rv</strain>
    </source>
</reference>
<reference key="2">
    <citation type="journal article" date="2003" name="J. Biol. Chem.">
        <title>Unique mechanism of action of the thiourea drug isoxyl on Mycobacterium tuberculosis.</title>
        <authorList>
            <person name="Phetsuksiri B."/>
            <person name="Jackson M."/>
            <person name="Scherman H."/>
            <person name="McNeil M."/>
            <person name="Besra G.S."/>
            <person name="Baulard A.R."/>
            <person name="Slayden R.A."/>
            <person name="DeBarber A.E."/>
            <person name="Barry C.E. III"/>
            <person name="Baird M.S."/>
            <person name="Crick D.C."/>
            <person name="Brennan P.J."/>
        </authorList>
    </citation>
    <scope>FUNCTION</scope>
    <scope>ACTIVITY REGULATION</scope>
    <scope>DRUG TARGET</scope>
    <scope>INDUCTION</scope>
    <scope>PATHWAY</scope>
    <scope>SUBCELLULAR LOCATION</scope>
    <source>
        <strain>H37Rv</strain>
    </source>
</reference>
<reference key="3">
    <citation type="journal article" date="2003" name="Proc. Natl. Acad. Sci. U.S.A.">
        <title>Genetic requirements for mycobacterial survival during infection.</title>
        <authorList>
            <person name="Sassetti C.M."/>
            <person name="Rubin E.J."/>
        </authorList>
    </citation>
    <scope>DISRUPTION PHENOTYPE</scope>
    <source>
        <strain>ATCC 25618 / H37Rv</strain>
    </source>
</reference>
<reference key="4">
    <citation type="journal article" date="2006" name="Biochemistry">
        <title>Identification of Rv3230c as the NADPH oxidoreductase of a two-protein DesA3 acyl-CoA desaturase in Mycobacterium tuberculosis H37Rv.</title>
        <authorList>
            <person name="Chang Y."/>
            <person name="Fox B.G."/>
        </authorList>
    </citation>
    <scope>FUNCTION</scope>
    <scope>CATALYTIC ACTIVITY</scope>
    <scope>SUBCELLULAR LOCATION</scope>
    <scope>INTERACTION WITH RV3230C</scope>
    <source>
        <strain>H37Rv</strain>
    </source>
</reference>
<reference key="5">
    <citation type="journal article" date="2008" name="BMC Syst. Biol.">
        <title>targetTB: a target identification pipeline for Mycobacterium tuberculosis through an interactome, reactome and genome-scale structural analysis.</title>
        <authorList>
            <person name="Raman K."/>
            <person name="Yeturu K."/>
            <person name="Chandra N."/>
        </authorList>
    </citation>
    <scope>IDENTIFICATION AS A DRUG TARGET [LARGE SCALE ANALYSIS]</scope>
</reference>
<reference key="6">
    <citation type="journal article" date="2008" name="J. Bacteriol.">
        <title>In vivo inactivation of the mycobacterial integral membrane stearoyl coenzyme A desaturase DesA3 by a C-terminus-specific degradation process.</title>
        <authorList>
            <person name="Chang Y."/>
            <person name="Wesenberg G.E."/>
            <person name="Bingman C.A."/>
            <person name="Fox B.G."/>
        </authorList>
    </citation>
    <scope>DEGRADATION BY PROTEOLYSIS</scope>
    <scope>MUTAGENESIS OF 425-LEU--ALA-427</scope>
    <source>
        <strain>H37Rv</strain>
    </source>
</reference>
<reference key="7">
    <citation type="journal article" date="2011" name="Mol. Cell. Proteomics">
        <title>Proteogenomic analysis of Mycobacterium tuberculosis by high resolution mass spectrometry.</title>
        <authorList>
            <person name="Kelkar D.S."/>
            <person name="Kumar D."/>
            <person name="Kumar P."/>
            <person name="Balakrishnan L."/>
            <person name="Muthusamy B."/>
            <person name="Yadav A.K."/>
            <person name="Shrivastava P."/>
            <person name="Marimuthu A."/>
            <person name="Anand S."/>
            <person name="Sundaram H."/>
            <person name="Kingsbury R."/>
            <person name="Harsha H.C."/>
            <person name="Nair B."/>
            <person name="Prasad T.S."/>
            <person name="Chauhan D.S."/>
            <person name="Katoch K."/>
            <person name="Katoch V.M."/>
            <person name="Kumar P."/>
            <person name="Chaerkady R."/>
            <person name="Ramachandran S."/>
            <person name="Dash D."/>
            <person name="Pandey A."/>
        </authorList>
    </citation>
    <scope>IDENTIFICATION BY MASS SPECTROMETRY [LARGE SCALE ANALYSIS]</scope>
    <source>
        <strain>ATCC 25618 / H37Rv</strain>
    </source>
</reference>
<organism>
    <name type="scientific">Mycobacterium tuberculosis (strain ATCC 25618 / H37Rv)</name>
    <dbReference type="NCBI Taxonomy" id="83332"/>
    <lineage>
        <taxon>Bacteria</taxon>
        <taxon>Bacillati</taxon>
        <taxon>Actinomycetota</taxon>
        <taxon>Actinomycetes</taxon>
        <taxon>Mycobacteriales</taxon>
        <taxon>Mycobacteriaceae</taxon>
        <taxon>Mycobacterium</taxon>
        <taxon>Mycobacterium tuberculosis complex</taxon>
    </lineage>
</organism>
<sequence length="427" mass="48443">MAITDVDVFAHLTDADIENLAAELDAIRRDVEESRGERDARYIRRTIAAQRALEVSGRLLLAGSSRRLAWWTGALTLGVAKIIENMEIGHNVMHGQWDWMNDPEIHSSTWEWDMSGSSKHWRYTHNFVHHKYTNILGMDDDVGYGMLRVTRDQRWKRYNIFNVVWNTILAIGFEWGVALQHLEIGKIFKGRADREAAKTRLREFSAKAGRQVFKDYVAFPALTSLSPGATYRSTLTANVVANVIRNVWSNAVIFCGHFPDGAEKFTKTDMIGEPKGQWYLRQMLGSANFNAGPALRFMSGNLCHQIEHHLYPDLPSNRLHEISVRVREVCDRYDLPYTTGSFLVQYGKTWRTLAKLSLPDKYLRDNADDAPETRSERMFAGLGPGFAGADPVTGRRRGLKTAIAAVRGRRRSKRMAKSVTEPDDLAA</sequence>
<dbReference type="EC" id="1.14.19.n4" evidence="4"/>
<dbReference type="EMBL" id="AL123456">
    <property type="protein sequence ID" value="CCP46048.1"/>
    <property type="molecule type" value="Genomic_DNA"/>
</dbReference>
<dbReference type="PIR" id="G70590">
    <property type="entry name" value="G70590"/>
</dbReference>
<dbReference type="RefSeq" id="WP_003416919.1">
    <property type="nucleotide sequence ID" value="NZ_NVQJ01000003.1"/>
</dbReference>
<dbReference type="RefSeq" id="YP_177948.1">
    <property type="nucleotide sequence ID" value="NC_000962.3"/>
</dbReference>
<dbReference type="SMR" id="P9WNZ3"/>
<dbReference type="FunCoup" id="P9WNZ3">
    <property type="interactions" value="53"/>
</dbReference>
<dbReference type="STRING" id="83332.Rv3229c"/>
<dbReference type="SwissLipids" id="SLP:000001156"/>
<dbReference type="PaxDb" id="83332-Rv3229c"/>
<dbReference type="DNASU" id="888821"/>
<dbReference type="GeneID" id="888821"/>
<dbReference type="KEGG" id="mtu:Rv3229c"/>
<dbReference type="KEGG" id="mtv:RVBD_3229c"/>
<dbReference type="TubercuList" id="Rv3229c"/>
<dbReference type="eggNOG" id="COG3239">
    <property type="taxonomic scope" value="Bacteria"/>
</dbReference>
<dbReference type="InParanoid" id="P9WNZ3"/>
<dbReference type="OrthoDB" id="104711at2"/>
<dbReference type="PhylomeDB" id="P9WNZ3"/>
<dbReference type="BioCyc" id="MetaCyc:G185E-7503-MONOMER"/>
<dbReference type="UniPathway" id="UPA00199"/>
<dbReference type="Proteomes" id="UP000001584">
    <property type="component" value="Chromosome"/>
</dbReference>
<dbReference type="GO" id="GO:0005886">
    <property type="term" value="C:plasma membrane"/>
    <property type="evidence" value="ECO:0007005"/>
    <property type="project" value="MTBBASE"/>
</dbReference>
<dbReference type="GO" id="GO:0016213">
    <property type="term" value="F:acyl-CoA 6-desaturase activity"/>
    <property type="evidence" value="ECO:0000314"/>
    <property type="project" value="MTBBASE"/>
</dbReference>
<dbReference type="GO" id="GO:0046872">
    <property type="term" value="F:metal ion binding"/>
    <property type="evidence" value="ECO:0007669"/>
    <property type="project" value="UniProtKB-KW"/>
</dbReference>
<dbReference type="GO" id="GO:0016717">
    <property type="term" value="F:oxidoreductase activity, acting on paired donors, with oxidation of a pair of donors resulting in the reduction of molecular oxygen to two molecules of water"/>
    <property type="evidence" value="ECO:0000318"/>
    <property type="project" value="GO_Central"/>
</dbReference>
<dbReference type="GO" id="GO:0006629">
    <property type="term" value="P:lipid metabolic process"/>
    <property type="evidence" value="ECO:0000318"/>
    <property type="project" value="GO_Central"/>
</dbReference>
<dbReference type="GO" id="GO:0042759">
    <property type="term" value="P:long-chain fatty acid biosynthetic process"/>
    <property type="evidence" value="ECO:0000314"/>
    <property type="project" value="MTBBASE"/>
</dbReference>
<dbReference type="CDD" id="cd03506">
    <property type="entry name" value="Delta6-FADS-like"/>
    <property type="match status" value="1"/>
</dbReference>
<dbReference type="InterPro" id="IPR005804">
    <property type="entry name" value="FA_desaturase_dom"/>
</dbReference>
<dbReference type="InterPro" id="IPR012171">
    <property type="entry name" value="Fatty_acid_desaturase"/>
</dbReference>
<dbReference type="PANTHER" id="PTHR19353:SF19">
    <property type="entry name" value="DELTA(5) FATTY ACID DESATURASE C-RELATED"/>
    <property type="match status" value="1"/>
</dbReference>
<dbReference type="PANTHER" id="PTHR19353">
    <property type="entry name" value="FATTY ACID DESATURASE 2"/>
    <property type="match status" value="1"/>
</dbReference>
<dbReference type="Pfam" id="PF00487">
    <property type="entry name" value="FA_desaturase"/>
    <property type="match status" value="1"/>
</dbReference>
<comment type="function">
    <text evidence="2 4">Is likely involved in the aerobic desaturation system responsible for the synthesis of oleic acid from stearoyl-CoA; oleic acid is a precursor of mycobacterial membrane phospholipids and triglycerides. Catalyzes the conversion of stearoyl-CoA to oleoyl-CoA by introduction of a cis double bond between carbons 9 and 10 of the acyl chain. Requires the electron transfer partner Rv3230c to pass two electrons from NADPH to its active site diiron center. Is also able to catalyze the 9-desaturation of palmitoyl-CoA to palmitoleoyl-CoA.</text>
</comment>
<comment type="catalytic activity">
    <reaction evidence="4">
        <text>octadecanoyl-CoA + NADPH + O2 + H(+) = (9Z)-octadecenoyl-CoA + NADP(+) + 2 H2O</text>
        <dbReference type="Rhea" id="RHEA:37971"/>
        <dbReference type="ChEBI" id="CHEBI:15377"/>
        <dbReference type="ChEBI" id="CHEBI:15378"/>
        <dbReference type="ChEBI" id="CHEBI:15379"/>
        <dbReference type="ChEBI" id="CHEBI:57387"/>
        <dbReference type="ChEBI" id="CHEBI:57394"/>
        <dbReference type="ChEBI" id="CHEBI:57783"/>
        <dbReference type="ChEBI" id="CHEBI:58349"/>
        <dbReference type="EC" id="1.14.19.n4"/>
    </reaction>
</comment>
<comment type="cofactor">
    <cofactor evidence="1">
        <name>Fe(2+)</name>
        <dbReference type="ChEBI" id="CHEBI:29033"/>
    </cofactor>
    <text evidence="1">Expected to bind 2 Fe(2+) ions per subunit.</text>
</comment>
<comment type="activity regulation">
    <text evidence="2">Inhibited by the anti-tuberculosis drug isoxyl (ISO).</text>
</comment>
<comment type="pathway">
    <text evidence="2">Lipid metabolism; fatty acid metabolism.</text>
</comment>
<comment type="subunit">
    <text evidence="4">Interacts with the electron transfer protein Rv3230c to form a functional acyl-CoA desaturase complex.</text>
</comment>
<comment type="subcellular location">
    <subcellularLocation>
        <location evidence="2 4">Cell membrane</location>
        <topology evidence="9">Multi-pass membrane protein</topology>
    </subcellularLocation>
</comment>
<comment type="induction">
    <text evidence="2">Is expressed during the exponential growth.</text>
</comment>
<comment type="PTM">
    <text evidence="5">Is rapidly degraded by a mycobacterial protein degradation system that specifically targets the residues LAA at the C-terminus, leading to a post-translational proteolytic regulation of DesA3 essential activity.</text>
</comment>
<comment type="disruption phenotype">
    <text evidence="3">Strains lacking this gene are shown to be attenuated in a mouse tuberculosis model.</text>
</comment>
<comment type="miscellaneous">
    <text evidence="10">Was identified as a high-confidence drug target.</text>
</comment>
<comment type="similarity">
    <text evidence="7">Belongs to the fatty acid desaturase type 1 family.</text>
</comment>